<comment type="similarity">
    <text evidence="1">Belongs to the UPF0246 family.</text>
</comment>
<sequence length="253" mass="29967">MKIIIAPAKIMKLDRDSFPVQSTPEFLKKTRILEKFLKSRTRDQLETLWHASDKVVEQSLFQLKNMDLDTNLTPAILAFSGIQYQYMAPDLFTQPALDYIQKNLRILSGFYGMLRPFDGICPYRLELNTKMVGFRDYSLYHFWDEDIANSLFKEDQVVINLASKQYMRLVKPYLNSARRMITVDFQELKNDKWKTVGVHAKMARGEMVRFMAEKQIKNPADLRDFHDFDFQFVPEVSSDDHYIFRTDFDFTRH</sequence>
<gene>
    <name type="ordered locus">LBA1843</name>
</gene>
<accession>Q5FI29</accession>
<reference key="1">
    <citation type="journal article" date="2005" name="Proc. Natl. Acad. Sci. U.S.A.">
        <title>Complete genome sequence of the probiotic lactic acid bacterium Lactobacillus acidophilus NCFM.</title>
        <authorList>
            <person name="Altermann E."/>
            <person name="Russell W.M."/>
            <person name="Azcarate-Peril M.A."/>
            <person name="Barrangou R."/>
            <person name="Buck B.L."/>
            <person name="McAuliffe O."/>
            <person name="Souther N."/>
            <person name="Dobson A."/>
            <person name="Duong T."/>
            <person name="Callanan M."/>
            <person name="Lick S."/>
            <person name="Hamrick A."/>
            <person name="Cano R."/>
            <person name="Klaenhammer T.R."/>
        </authorList>
    </citation>
    <scope>NUCLEOTIDE SEQUENCE [LARGE SCALE GENOMIC DNA]</scope>
    <source>
        <strain>ATCC 700396 / NCK56 / N2 / NCFM</strain>
    </source>
</reference>
<organism>
    <name type="scientific">Lactobacillus acidophilus (strain ATCC 700396 / NCK56 / N2 / NCFM)</name>
    <dbReference type="NCBI Taxonomy" id="272621"/>
    <lineage>
        <taxon>Bacteria</taxon>
        <taxon>Bacillati</taxon>
        <taxon>Bacillota</taxon>
        <taxon>Bacilli</taxon>
        <taxon>Lactobacillales</taxon>
        <taxon>Lactobacillaceae</taxon>
        <taxon>Lactobacillus</taxon>
    </lineage>
</organism>
<proteinExistence type="inferred from homology"/>
<feature type="chain" id="PRO_0000262026" description="UPF0246 protein LBA1843">
    <location>
        <begin position="1"/>
        <end position="253"/>
    </location>
</feature>
<name>Y1843_LACAC</name>
<keyword id="KW-1185">Reference proteome</keyword>
<protein>
    <recommendedName>
        <fullName evidence="1">UPF0246 protein LBA1843</fullName>
    </recommendedName>
</protein>
<dbReference type="EMBL" id="CP000033">
    <property type="protein sequence ID" value="AAV43645.1"/>
    <property type="molecule type" value="Genomic_DNA"/>
</dbReference>
<dbReference type="RefSeq" id="YP_194676.1">
    <property type="nucleotide sequence ID" value="NC_006814.3"/>
</dbReference>
<dbReference type="SMR" id="Q5FI29"/>
<dbReference type="KEGG" id="lac:LBA1843"/>
<dbReference type="PATRIC" id="fig|272621.13.peg.1752"/>
<dbReference type="eggNOG" id="COG3022">
    <property type="taxonomic scope" value="Bacteria"/>
</dbReference>
<dbReference type="HOGENOM" id="CLU_061989_1_0_9"/>
<dbReference type="OrthoDB" id="9777133at2"/>
<dbReference type="BioCyc" id="LACI272621:G1G49-1800-MONOMER"/>
<dbReference type="Proteomes" id="UP000006381">
    <property type="component" value="Chromosome"/>
</dbReference>
<dbReference type="GO" id="GO:0005829">
    <property type="term" value="C:cytosol"/>
    <property type="evidence" value="ECO:0007669"/>
    <property type="project" value="TreeGrafter"/>
</dbReference>
<dbReference type="GO" id="GO:0033194">
    <property type="term" value="P:response to hydroperoxide"/>
    <property type="evidence" value="ECO:0007669"/>
    <property type="project" value="TreeGrafter"/>
</dbReference>
<dbReference type="HAMAP" id="MF_00652">
    <property type="entry name" value="UPF0246"/>
    <property type="match status" value="1"/>
</dbReference>
<dbReference type="InterPro" id="IPR005583">
    <property type="entry name" value="YaaA"/>
</dbReference>
<dbReference type="NCBIfam" id="NF002543">
    <property type="entry name" value="PRK02101.1-4"/>
    <property type="match status" value="1"/>
</dbReference>
<dbReference type="PANTHER" id="PTHR30283:SF4">
    <property type="entry name" value="PEROXIDE STRESS RESISTANCE PROTEIN YAAA"/>
    <property type="match status" value="1"/>
</dbReference>
<dbReference type="PANTHER" id="PTHR30283">
    <property type="entry name" value="PEROXIDE STRESS RESPONSE PROTEIN YAAA"/>
    <property type="match status" value="1"/>
</dbReference>
<dbReference type="Pfam" id="PF03883">
    <property type="entry name" value="H2O2_YaaD"/>
    <property type="match status" value="1"/>
</dbReference>
<evidence type="ECO:0000255" key="1">
    <source>
        <dbReference type="HAMAP-Rule" id="MF_00652"/>
    </source>
</evidence>